<comment type="function">
    <text evidence="1">Required for the formation of a threonylcarbamoyl group on adenosine at position 37 (t(6)A37) in tRNAs that read codons beginning with adenine. Is involved in the transfer of the threonylcarbamoyl moiety of threonylcarbamoyl-AMP (TC-AMP) to the N6 group of A37, together with TsaE and TsaB. TsaD likely plays a direct catalytic role in this reaction.</text>
</comment>
<comment type="catalytic activity">
    <reaction evidence="1">
        <text>L-threonylcarbamoyladenylate + adenosine(37) in tRNA = N(6)-L-threonylcarbamoyladenosine(37) in tRNA + AMP + H(+)</text>
        <dbReference type="Rhea" id="RHEA:37059"/>
        <dbReference type="Rhea" id="RHEA-COMP:10162"/>
        <dbReference type="Rhea" id="RHEA-COMP:10163"/>
        <dbReference type="ChEBI" id="CHEBI:15378"/>
        <dbReference type="ChEBI" id="CHEBI:73682"/>
        <dbReference type="ChEBI" id="CHEBI:74411"/>
        <dbReference type="ChEBI" id="CHEBI:74418"/>
        <dbReference type="ChEBI" id="CHEBI:456215"/>
        <dbReference type="EC" id="2.3.1.234"/>
    </reaction>
</comment>
<comment type="cofactor">
    <cofactor evidence="1">
        <name>Fe(2+)</name>
        <dbReference type="ChEBI" id="CHEBI:29033"/>
    </cofactor>
    <text evidence="1">Binds 1 Fe(2+) ion per subunit.</text>
</comment>
<comment type="subcellular location">
    <subcellularLocation>
        <location evidence="1">Cytoplasm</location>
    </subcellularLocation>
</comment>
<comment type="similarity">
    <text evidence="1">Belongs to the KAE1 / TsaD family.</text>
</comment>
<name>TSAD_STAAS</name>
<evidence type="ECO:0000255" key="1">
    <source>
        <dbReference type="HAMAP-Rule" id="MF_01445"/>
    </source>
</evidence>
<organism>
    <name type="scientific">Staphylococcus aureus (strain MSSA476)</name>
    <dbReference type="NCBI Taxonomy" id="282459"/>
    <lineage>
        <taxon>Bacteria</taxon>
        <taxon>Bacillati</taxon>
        <taxon>Bacillota</taxon>
        <taxon>Bacilli</taxon>
        <taxon>Bacillales</taxon>
        <taxon>Staphylococcaceae</taxon>
        <taxon>Staphylococcus</taxon>
    </lineage>
</organism>
<dbReference type="EC" id="2.3.1.234" evidence="1"/>
<dbReference type="EMBL" id="BX571857">
    <property type="protein sequence ID" value="CAG43761.1"/>
    <property type="molecule type" value="Genomic_DNA"/>
</dbReference>
<dbReference type="RefSeq" id="WP_000159032.1">
    <property type="nucleotide sequence ID" value="NC_002953.3"/>
</dbReference>
<dbReference type="SMR" id="Q6G7Q8"/>
<dbReference type="KEGG" id="sas:SAS1954"/>
<dbReference type="HOGENOM" id="CLU_023208_0_2_9"/>
<dbReference type="GO" id="GO:0005737">
    <property type="term" value="C:cytoplasm"/>
    <property type="evidence" value="ECO:0007669"/>
    <property type="project" value="UniProtKB-SubCell"/>
</dbReference>
<dbReference type="GO" id="GO:0005506">
    <property type="term" value="F:iron ion binding"/>
    <property type="evidence" value="ECO:0007669"/>
    <property type="project" value="UniProtKB-UniRule"/>
</dbReference>
<dbReference type="GO" id="GO:0061711">
    <property type="term" value="F:N(6)-L-threonylcarbamoyladenine synthase activity"/>
    <property type="evidence" value="ECO:0007669"/>
    <property type="project" value="UniProtKB-EC"/>
</dbReference>
<dbReference type="GO" id="GO:0002949">
    <property type="term" value="P:tRNA threonylcarbamoyladenosine modification"/>
    <property type="evidence" value="ECO:0007669"/>
    <property type="project" value="UniProtKB-UniRule"/>
</dbReference>
<dbReference type="CDD" id="cd24133">
    <property type="entry name" value="ASKHA_NBD_TsaD_bac"/>
    <property type="match status" value="1"/>
</dbReference>
<dbReference type="FunFam" id="3.30.420.40:FF:000012">
    <property type="entry name" value="tRNA N6-adenosine threonylcarbamoyltransferase"/>
    <property type="match status" value="1"/>
</dbReference>
<dbReference type="FunFam" id="3.30.420.40:FF:000040">
    <property type="entry name" value="tRNA N6-adenosine threonylcarbamoyltransferase"/>
    <property type="match status" value="1"/>
</dbReference>
<dbReference type="Gene3D" id="3.30.420.40">
    <property type="match status" value="2"/>
</dbReference>
<dbReference type="HAMAP" id="MF_01445">
    <property type="entry name" value="TsaD"/>
    <property type="match status" value="1"/>
</dbReference>
<dbReference type="InterPro" id="IPR043129">
    <property type="entry name" value="ATPase_NBD"/>
</dbReference>
<dbReference type="InterPro" id="IPR000905">
    <property type="entry name" value="Gcp-like_dom"/>
</dbReference>
<dbReference type="InterPro" id="IPR017861">
    <property type="entry name" value="KAE1/TsaD"/>
</dbReference>
<dbReference type="InterPro" id="IPR017860">
    <property type="entry name" value="Peptidase_M22_CS"/>
</dbReference>
<dbReference type="InterPro" id="IPR022450">
    <property type="entry name" value="TsaD"/>
</dbReference>
<dbReference type="NCBIfam" id="TIGR00329">
    <property type="entry name" value="gcp_kae1"/>
    <property type="match status" value="1"/>
</dbReference>
<dbReference type="NCBIfam" id="TIGR03723">
    <property type="entry name" value="T6A_TsaD_YgjD"/>
    <property type="match status" value="1"/>
</dbReference>
<dbReference type="PANTHER" id="PTHR11735">
    <property type="entry name" value="TRNA N6-ADENOSINE THREONYLCARBAMOYLTRANSFERASE"/>
    <property type="match status" value="1"/>
</dbReference>
<dbReference type="PANTHER" id="PTHR11735:SF6">
    <property type="entry name" value="TRNA N6-ADENOSINE THREONYLCARBAMOYLTRANSFERASE, MITOCHONDRIAL"/>
    <property type="match status" value="1"/>
</dbReference>
<dbReference type="Pfam" id="PF00814">
    <property type="entry name" value="TsaD"/>
    <property type="match status" value="1"/>
</dbReference>
<dbReference type="PRINTS" id="PR00789">
    <property type="entry name" value="OSIALOPTASE"/>
</dbReference>
<dbReference type="SUPFAM" id="SSF53067">
    <property type="entry name" value="Actin-like ATPase domain"/>
    <property type="match status" value="2"/>
</dbReference>
<dbReference type="PROSITE" id="PS01016">
    <property type="entry name" value="GLYCOPROTEASE"/>
    <property type="match status" value="1"/>
</dbReference>
<keyword id="KW-0012">Acyltransferase</keyword>
<keyword id="KW-0963">Cytoplasm</keyword>
<keyword id="KW-0408">Iron</keyword>
<keyword id="KW-0479">Metal-binding</keyword>
<keyword id="KW-0808">Transferase</keyword>
<keyword id="KW-0819">tRNA processing</keyword>
<reference key="1">
    <citation type="journal article" date="2004" name="Proc. Natl. Acad. Sci. U.S.A.">
        <title>Complete genomes of two clinical Staphylococcus aureus strains: evidence for the rapid evolution of virulence and drug resistance.</title>
        <authorList>
            <person name="Holden M.T.G."/>
            <person name="Feil E.J."/>
            <person name="Lindsay J.A."/>
            <person name="Peacock S.J."/>
            <person name="Day N.P.J."/>
            <person name="Enright M.C."/>
            <person name="Foster T.J."/>
            <person name="Moore C.E."/>
            <person name="Hurst L."/>
            <person name="Atkin R."/>
            <person name="Barron A."/>
            <person name="Bason N."/>
            <person name="Bentley S.D."/>
            <person name="Chillingworth C."/>
            <person name="Chillingworth T."/>
            <person name="Churcher C."/>
            <person name="Clark L."/>
            <person name="Corton C."/>
            <person name="Cronin A."/>
            <person name="Doggett J."/>
            <person name="Dowd L."/>
            <person name="Feltwell T."/>
            <person name="Hance Z."/>
            <person name="Harris B."/>
            <person name="Hauser H."/>
            <person name="Holroyd S."/>
            <person name="Jagels K."/>
            <person name="James K.D."/>
            <person name="Lennard N."/>
            <person name="Line A."/>
            <person name="Mayes R."/>
            <person name="Moule S."/>
            <person name="Mungall K."/>
            <person name="Ormond D."/>
            <person name="Quail M.A."/>
            <person name="Rabbinowitsch E."/>
            <person name="Rutherford K.M."/>
            <person name="Sanders M."/>
            <person name="Sharp S."/>
            <person name="Simmonds M."/>
            <person name="Stevens K."/>
            <person name="Whitehead S."/>
            <person name="Barrell B.G."/>
            <person name="Spratt B.G."/>
            <person name="Parkhill J."/>
        </authorList>
    </citation>
    <scope>NUCLEOTIDE SEQUENCE [LARGE SCALE GENOMIC DNA]</scope>
    <source>
        <strain>MSSA476</strain>
    </source>
</reference>
<gene>
    <name evidence="1" type="primary">tsaD</name>
    <name type="synonym">gcp</name>
    <name type="ordered locus">SAS1954</name>
</gene>
<sequence>MTKDILILAVETSCDETSVSFIKNGRDILSNTVLSQIESHKRFGGVVPEVASRHHVEGITTTINEALVDADVSIEDIDAIAVTEGPGLIGALLIGVNAAKALAFAYDKPLIPVHHIAGHIYANHIEEPLTFPLIALIVSGGHTELVYMKDHLSFEVIGETRDDAVGEAYDKVARTIGLNYPGGPQVDRLAAEGEDTYSFPRVWLDKDSYDFSFSGLKSAVINQLHNQRQKNIPIIEANVATSFQNSVVEVLTFKAIQACKEYGVQRLIVAGGVASNKGLRQSLADQCKVNDIQLTIPSPKLCTDNAAMIGVAGHYLYQQGRFADLALNGHSNIDLEEYSAE</sequence>
<protein>
    <recommendedName>
        <fullName evidence="1">tRNA N6-adenosine threonylcarbamoyltransferase</fullName>
        <ecNumber evidence="1">2.3.1.234</ecNumber>
    </recommendedName>
    <alternativeName>
        <fullName evidence="1">N6-L-threonylcarbamoyladenine synthase</fullName>
        <shortName evidence="1">t(6)A synthase</shortName>
    </alternativeName>
    <alternativeName>
        <fullName evidence="1">t(6)A37 threonylcarbamoyladenosine biosynthesis protein TsaD</fullName>
    </alternativeName>
    <alternativeName>
        <fullName evidence="1">tRNA threonylcarbamoyladenosine biosynthesis protein TsaD</fullName>
    </alternativeName>
</protein>
<proteinExistence type="inferred from homology"/>
<accession>Q6G7Q8</accession>
<feature type="chain" id="PRO_0000303547" description="tRNA N6-adenosine threonylcarbamoyltransferase">
    <location>
        <begin position="1"/>
        <end position="341"/>
    </location>
</feature>
<feature type="binding site" evidence="1">
    <location>
        <position position="115"/>
    </location>
    <ligand>
        <name>Fe cation</name>
        <dbReference type="ChEBI" id="CHEBI:24875"/>
    </ligand>
</feature>
<feature type="binding site" evidence="1">
    <location>
        <position position="119"/>
    </location>
    <ligand>
        <name>Fe cation</name>
        <dbReference type="ChEBI" id="CHEBI:24875"/>
    </ligand>
</feature>
<feature type="binding site" evidence="1">
    <location>
        <begin position="137"/>
        <end position="141"/>
    </location>
    <ligand>
        <name>substrate</name>
    </ligand>
</feature>
<feature type="binding site" evidence="1">
    <location>
        <position position="170"/>
    </location>
    <ligand>
        <name>substrate</name>
    </ligand>
</feature>
<feature type="binding site" evidence="1">
    <location>
        <position position="183"/>
    </location>
    <ligand>
        <name>substrate</name>
    </ligand>
</feature>
<feature type="binding site" evidence="1">
    <location>
        <position position="187"/>
    </location>
    <ligand>
        <name>substrate</name>
    </ligand>
</feature>
<feature type="binding site" evidence="1">
    <location>
        <position position="276"/>
    </location>
    <ligand>
        <name>substrate</name>
    </ligand>
</feature>
<feature type="binding site" evidence="1">
    <location>
        <position position="304"/>
    </location>
    <ligand>
        <name>Fe cation</name>
        <dbReference type="ChEBI" id="CHEBI:24875"/>
    </ligand>
</feature>